<sequence length="440" mass="47001">MFLAQEIIRKKRDGHALSDEEIRFFINGIRDNTISEGQIAALAMTIFFHDMTMPERVSLTMAMRDSGTVLDWKSLNLNGPIVDKHSTGGVGDVTSLMLGPMVAACGGYVPMISGRGLGHTGGTLDKLEAIPGFDIFPDDNRFREIIQDVGVAIIGQTSSLAPADKRFYATRDITATVDSIPLITGSILAKKLAEGLDALVMDVKVGSGAFMPTYELSKALAEAIVGVANGAGVRTTALLTDMNQVLASSAGNAVEVREAVQFLTGEYRNPRLFDVTMALCVEMLISGQLAKDDAEARAKLQAVLDNGKAAEVFGRMVAAQKGPSDFVENYDKYLPTAMLSKAVYADTEGFISAMDTRALGMAVVSMGGGRRQASDTIDYSVGFTDMARLGDSIDGQRPLAVIHAKDEASWQEAAKAVKAAIILDDKAPASTPSVYRRITE</sequence>
<protein>
    <recommendedName>
        <fullName evidence="1">Thymidine phosphorylase</fullName>
        <ecNumber evidence="1">2.4.2.4</ecNumber>
    </recommendedName>
    <alternativeName>
        <fullName evidence="1">TdRPase</fullName>
    </alternativeName>
</protein>
<feature type="chain" id="PRO_1000186269" description="Thymidine phosphorylase">
    <location>
        <begin position="1"/>
        <end position="440"/>
    </location>
</feature>
<keyword id="KW-0328">Glycosyltransferase</keyword>
<keyword id="KW-0808">Transferase</keyword>
<reference key="1">
    <citation type="journal article" date="2011" name="J. Bacteriol.">
        <title>Comparative genomics of 28 Salmonella enterica isolates: evidence for CRISPR-mediated adaptive sublineage evolution.</title>
        <authorList>
            <person name="Fricke W.F."/>
            <person name="Mammel M.K."/>
            <person name="McDermott P.F."/>
            <person name="Tartera C."/>
            <person name="White D.G."/>
            <person name="Leclerc J.E."/>
            <person name="Ravel J."/>
            <person name="Cebula T.A."/>
        </authorList>
    </citation>
    <scope>NUCLEOTIDE SEQUENCE [LARGE SCALE GENOMIC DNA]</scope>
    <source>
        <strain>SL476</strain>
    </source>
</reference>
<gene>
    <name evidence="1" type="primary">deoA</name>
    <name type="ordered locus">SeHA_C4976</name>
</gene>
<organism>
    <name type="scientific">Salmonella heidelberg (strain SL476)</name>
    <dbReference type="NCBI Taxonomy" id="454169"/>
    <lineage>
        <taxon>Bacteria</taxon>
        <taxon>Pseudomonadati</taxon>
        <taxon>Pseudomonadota</taxon>
        <taxon>Gammaproteobacteria</taxon>
        <taxon>Enterobacterales</taxon>
        <taxon>Enterobacteriaceae</taxon>
        <taxon>Salmonella</taxon>
    </lineage>
</organism>
<comment type="function">
    <text evidence="1">The enzymes which catalyze the reversible phosphorolysis of pyrimidine nucleosides are involved in the degradation of these compounds and in their utilization as carbon and energy sources, or in the rescue of pyrimidine bases for nucleotide synthesis.</text>
</comment>
<comment type="catalytic activity">
    <reaction evidence="1">
        <text>thymidine + phosphate = 2-deoxy-alpha-D-ribose 1-phosphate + thymine</text>
        <dbReference type="Rhea" id="RHEA:16037"/>
        <dbReference type="ChEBI" id="CHEBI:17748"/>
        <dbReference type="ChEBI" id="CHEBI:17821"/>
        <dbReference type="ChEBI" id="CHEBI:43474"/>
        <dbReference type="ChEBI" id="CHEBI:57259"/>
        <dbReference type="EC" id="2.4.2.4"/>
    </reaction>
</comment>
<comment type="pathway">
    <text evidence="1">Pyrimidine metabolism; dTMP biosynthesis via salvage pathway; dTMP from thymine: step 1/2.</text>
</comment>
<comment type="subunit">
    <text evidence="1">Homodimer.</text>
</comment>
<comment type="similarity">
    <text evidence="1">Belongs to the thymidine/pyrimidine-nucleoside phosphorylase family.</text>
</comment>
<evidence type="ECO:0000255" key="1">
    <source>
        <dbReference type="HAMAP-Rule" id="MF_01628"/>
    </source>
</evidence>
<name>TYPH_SALHS</name>
<accession>B4TH00</accession>
<proteinExistence type="inferred from homology"/>
<dbReference type="EC" id="2.4.2.4" evidence="1"/>
<dbReference type="EMBL" id="CP001120">
    <property type="protein sequence ID" value="ACF65929.1"/>
    <property type="molecule type" value="Genomic_DNA"/>
</dbReference>
<dbReference type="RefSeq" id="WP_000477847.1">
    <property type="nucleotide sequence ID" value="NC_011083.1"/>
</dbReference>
<dbReference type="SMR" id="B4TH00"/>
<dbReference type="KEGG" id="seh:SeHA_C4976"/>
<dbReference type="HOGENOM" id="CLU_025040_0_1_6"/>
<dbReference type="UniPathway" id="UPA00578">
    <property type="reaction ID" value="UER00638"/>
</dbReference>
<dbReference type="Proteomes" id="UP000001866">
    <property type="component" value="Chromosome"/>
</dbReference>
<dbReference type="GO" id="GO:0005829">
    <property type="term" value="C:cytosol"/>
    <property type="evidence" value="ECO:0007669"/>
    <property type="project" value="TreeGrafter"/>
</dbReference>
<dbReference type="GO" id="GO:0004645">
    <property type="term" value="F:1,4-alpha-oligoglucan phosphorylase activity"/>
    <property type="evidence" value="ECO:0007669"/>
    <property type="project" value="InterPro"/>
</dbReference>
<dbReference type="GO" id="GO:0009032">
    <property type="term" value="F:thymidine phosphorylase activity"/>
    <property type="evidence" value="ECO:0007669"/>
    <property type="project" value="UniProtKB-UniRule"/>
</dbReference>
<dbReference type="GO" id="GO:0006206">
    <property type="term" value="P:pyrimidine nucleobase metabolic process"/>
    <property type="evidence" value="ECO:0007669"/>
    <property type="project" value="InterPro"/>
</dbReference>
<dbReference type="GO" id="GO:0046104">
    <property type="term" value="P:thymidine metabolic process"/>
    <property type="evidence" value="ECO:0007669"/>
    <property type="project" value="UniProtKB-UniRule"/>
</dbReference>
<dbReference type="FunFam" id="3.40.1030.10:FF:000001">
    <property type="entry name" value="Thymidine phosphorylase"/>
    <property type="match status" value="1"/>
</dbReference>
<dbReference type="FunFam" id="3.90.1170.30:FF:000001">
    <property type="entry name" value="Thymidine phosphorylase"/>
    <property type="match status" value="1"/>
</dbReference>
<dbReference type="Gene3D" id="3.40.1030.10">
    <property type="entry name" value="Nucleoside phosphorylase/phosphoribosyltransferase catalytic domain"/>
    <property type="match status" value="1"/>
</dbReference>
<dbReference type="Gene3D" id="3.90.1170.30">
    <property type="entry name" value="Pyrimidine nucleoside phosphorylase-like, C-terminal domain"/>
    <property type="match status" value="1"/>
</dbReference>
<dbReference type="Gene3D" id="1.20.970.10">
    <property type="entry name" value="Transferase, Pyrimidine Nucleoside Phosphorylase, Chain C"/>
    <property type="match status" value="1"/>
</dbReference>
<dbReference type="HAMAP" id="MF_01628">
    <property type="entry name" value="Thymid_phosp"/>
    <property type="match status" value="1"/>
</dbReference>
<dbReference type="InterPro" id="IPR000312">
    <property type="entry name" value="Glycosyl_Trfase_fam3"/>
</dbReference>
<dbReference type="InterPro" id="IPR017459">
    <property type="entry name" value="Glycosyl_Trfase_fam3_N_dom"/>
</dbReference>
<dbReference type="InterPro" id="IPR036320">
    <property type="entry name" value="Glycosyl_Trfase_fam3_N_dom_sf"/>
</dbReference>
<dbReference type="InterPro" id="IPR035902">
    <property type="entry name" value="Nuc_phospho_transferase"/>
</dbReference>
<dbReference type="InterPro" id="IPR036566">
    <property type="entry name" value="PYNP-like_C_sf"/>
</dbReference>
<dbReference type="InterPro" id="IPR013102">
    <property type="entry name" value="PYNP_C"/>
</dbReference>
<dbReference type="InterPro" id="IPR018090">
    <property type="entry name" value="Pyrmidine_PPas_bac/euk"/>
</dbReference>
<dbReference type="InterPro" id="IPR017872">
    <property type="entry name" value="Pyrmidine_PPase_CS"/>
</dbReference>
<dbReference type="InterPro" id="IPR000053">
    <property type="entry name" value="Thymidine/pyrmidine_PPase"/>
</dbReference>
<dbReference type="InterPro" id="IPR013465">
    <property type="entry name" value="Thymidine_Pase"/>
</dbReference>
<dbReference type="NCBIfam" id="NF004490">
    <property type="entry name" value="PRK05820.1"/>
    <property type="match status" value="1"/>
</dbReference>
<dbReference type="NCBIfam" id="TIGR02643">
    <property type="entry name" value="T_phosphoryl"/>
    <property type="match status" value="1"/>
</dbReference>
<dbReference type="NCBIfam" id="TIGR02644">
    <property type="entry name" value="Y_phosphoryl"/>
    <property type="match status" value="1"/>
</dbReference>
<dbReference type="PANTHER" id="PTHR10515">
    <property type="entry name" value="THYMIDINE PHOSPHORYLASE"/>
    <property type="match status" value="1"/>
</dbReference>
<dbReference type="PANTHER" id="PTHR10515:SF0">
    <property type="entry name" value="THYMIDINE PHOSPHORYLASE"/>
    <property type="match status" value="1"/>
</dbReference>
<dbReference type="Pfam" id="PF02885">
    <property type="entry name" value="Glycos_trans_3N"/>
    <property type="match status" value="1"/>
</dbReference>
<dbReference type="Pfam" id="PF00591">
    <property type="entry name" value="Glycos_transf_3"/>
    <property type="match status" value="1"/>
</dbReference>
<dbReference type="Pfam" id="PF07831">
    <property type="entry name" value="PYNP_C"/>
    <property type="match status" value="1"/>
</dbReference>
<dbReference type="PIRSF" id="PIRSF000478">
    <property type="entry name" value="TP_PyNP"/>
    <property type="match status" value="1"/>
</dbReference>
<dbReference type="SMART" id="SM00941">
    <property type="entry name" value="PYNP_C"/>
    <property type="match status" value="1"/>
</dbReference>
<dbReference type="SUPFAM" id="SSF52418">
    <property type="entry name" value="Nucleoside phosphorylase/phosphoribosyltransferase catalytic domain"/>
    <property type="match status" value="1"/>
</dbReference>
<dbReference type="SUPFAM" id="SSF47648">
    <property type="entry name" value="Nucleoside phosphorylase/phosphoribosyltransferase N-terminal domain"/>
    <property type="match status" value="1"/>
</dbReference>
<dbReference type="SUPFAM" id="SSF54680">
    <property type="entry name" value="Pyrimidine nucleoside phosphorylase C-terminal domain"/>
    <property type="match status" value="1"/>
</dbReference>
<dbReference type="PROSITE" id="PS00647">
    <property type="entry name" value="THYMID_PHOSPHORYLASE"/>
    <property type="match status" value="1"/>
</dbReference>